<name>RL10_THET2</name>
<evidence type="ECO:0000255" key="1">
    <source>
        <dbReference type="HAMAP-Rule" id="MF_00362"/>
    </source>
</evidence>
<evidence type="ECO:0000305" key="2"/>
<evidence type="ECO:0007829" key="3">
    <source>
        <dbReference type="PDB" id="4V63"/>
    </source>
</evidence>
<accession>Q72GS1</accession>
<feature type="chain" id="PRO_0000154735" description="Large ribosomal subunit protein uL10">
    <location>
        <begin position="1"/>
        <end position="173"/>
    </location>
</feature>
<feature type="helix" evidence="3">
    <location>
        <begin position="4"/>
        <end position="7"/>
    </location>
</feature>
<feature type="turn" evidence="3">
    <location>
        <begin position="8"/>
        <end position="12"/>
    </location>
</feature>
<feature type="helix" evidence="3">
    <location>
        <begin position="13"/>
        <end position="18"/>
    </location>
</feature>
<feature type="helix" evidence="3">
    <location>
        <begin position="57"/>
        <end position="64"/>
    </location>
</feature>
<organism>
    <name type="scientific">Thermus thermophilus (strain ATCC BAA-163 / DSM 7039 / HB27)</name>
    <dbReference type="NCBI Taxonomy" id="262724"/>
    <lineage>
        <taxon>Bacteria</taxon>
        <taxon>Thermotogati</taxon>
        <taxon>Deinococcota</taxon>
        <taxon>Deinococci</taxon>
        <taxon>Thermales</taxon>
        <taxon>Thermaceae</taxon>
        <taxon>Thermus</taxon>
    </lineage>
</organism>
<proteinExistence type="evidence at protein level"/>
<protein>
    <recommendedName>
        <fullName evidence="1">Large ribosomal subunit protein uL10</fullName>
    </recommendedName>
    <alternativeName>
        <fullName evidence="2">50S ribosomal protein L10</fullName>
    </alternativeName>
</protein>
<comment type="function">
    <text evidence="1">Forms part of the ribosomal stalk, playing a central role in the interaction of the ribosome with GTP-bound translation factors.</text>
</comment>
<comment type="subunit">
    <text evidence="1">Part of the ribosomal stalk of the 50S ribosomal subunit. The N-terminus interacts with L11 and the large rRNA to form the base of the stalk. The C-terminus forms an elongated spine to which L12 dimers bind in a sequential fashion forming a multimeric L10(L12)X complex.</text>
</comment>
<comment type="similarity">
    <text evidence="1">Belongs to the universal ribosomal protein uL10 family.</text>
</comment>
<gene>
    <name evidence="1" type="primary">rplJ</name>
    <name type="ordered locus">TT_C1777</name>
</gene>
<reference key="1">
    <citation type="journal article" date="2004" name="Nat. Biotechnol.">
        <title>The genome sequence of the extreme thermophile Thermus thermophilus.</title>
        <authorList>
            <person name="Henne A."/>
            <person name="Brueggemann H."/>
            <person name="Raasch C."/>
            <person name="Wiezer A."/>
            <person name="Hartsch T."/>
            <person name="Liesegang H."/>
            <person name="Johann A."/>
            <person name="Lienard T."/>
            <person name="Gohl O."/>
            <person name="Martinez-Arias R."/>
            <person name="Jacobi C."/>
            <person name="Starkuviene V."/>
            <person name="Schlenczeck S."/>
            <person name="Dencker S."/>
            <person name="Huber R."/>
            <person name="Klenk H.-P."/>
            <person name="Kramer W."/>
            <person name="Merkl R."/>
            <person name="Gottschalk G."/>
            <person name="Fritz H.-J."/>
        </authorList>
    </citation>
    <scope>NUCLEOTIDE SEQUENCE [LARGE SCALE GENOMIC DNA]</scope>
    <source>
        <strain>ATCC BAA-163 / DSM 7039 / HB27</strain>
    </source>
</reference>
<sequence length="173" mass="18566">MPNKRNVELLATLKENLERAQGSFFLVNYQGLPAKETHALRQALKQNGARLFVAKNTLIRLALKELGLPELDGLQGPSAVVFYEDPVAAAKTLVQFAKSNPKGIPQVKSGLLQGQILTAKDVEALAELPTMDELRAELVGVLQAPMAELVGVLGGVARELVGILEAYAEKKAA</sequence>
<dbReference type="EMBL" id="AE017221">
    <property type="protein sequence ID" value="AAS82119.1"/>
    <property type="molecule type" value="Genomic_DNA"/>
</dbReference>
<dbReference type="RefSeq" id="WP_008630583.1">
    <property type="nucleotide sequence ID" value="NC_005835.1"/>
</dbReference>
<dbReference type="PDB" id="4V63">
    <property type="method" value="X-ray"/>
    <property type="resolution" value="3.21 A"/>
    <property type="chains" value="BJ/DJ=1-173"/>
</dbReference>
<dbReference type="PDB" id="4V7P">
    <property type="method" value="X-ray"/>
    <property type="resolution" value="3.62 A"/>
    <property type="chains" value="BI/CI=1-173"/>
</dbReference>
<dbReference type="PDB" id="4V83">
    <property type="method" value="X-ray"/>
    <property type="resolution" value="3.50 A"/>
    <property type="chains" value="BI/DI=3-67"/>
</dbReference>
<dbReference type="PDB" id="4V84">
    <property type="method" value="X-ray"/>
    <property type="resolution" value="3.40 A"/>
    <property type="chains" value="BI/DI=3-67"/>
</dbReference>
<dbReference type="PDBsum" id="4V63"/>
<dbReference type="PDBsum" id="4V7P"/>
<dbReference type="PDBsum" id="4V83"/>
<dbReference type="PDBsum" id="4V84"/>
<dbReference type="SMR" id="Q72GS1"/>
<dbReference type="IntAct" id="Q72GS1">
    <property type="interactions" value="50"/>
</dbReference>
<dbReference type="GeneID" id="3168578"/>
<dbReference type="KEGG" id="tth:TT_C1777"/>
<dbReference type="eggNOG" id="COG0244">
    <property type="taxonomic scope" value="Bacteria"/>
</dbReference>
<dbReference type="HOGENOM" id="CLU_092227_1_2_0"/>
<dbReference type="OrthoDB" id="9808307at2"/>
<dbReference type="Proteomes" id="UP000000592">
    <property type="component" value="Chromosome"/>
</dbReference>
<dbReference type="GO" id="GO:1990904">
    <property type="term" value="C:ribonucleoprotein complex"/>
    <property type="evidence" value="ECO:0007669"/>
    <property type="project" value="UniProtKB-KW"/>
</dbReference>
<dbReference type="GO" id="GO:0005840">
    <property type="term" value="C:ribosome"/>
    <property type="evidence" value="ECO:0007669"/>
    <property type="project" value="UniProtKB-KW"/>
</dbReference>
<dbReference type="GO" id="GO:0070180">
    <property type="term" value="F:large ribosomal subunit rRNA binding"/>
    <property type="evidence" value="ECO:0007669"/>
    <property type="project" value="UniProtKB-UniRule"/>
</dbReference>
<dbReference type="GO" id="GO:0006412">
    <property type="term" value="P:translation"/>
    <property type="evidence" value="ECO:0007669"/>
    <property type="project" value="UniProtKB-UniRule"/>
</dbReference>
<dbReference type="CDD" id="cd05797">
    <property type="entry name" value="Ribosomal_L10"/>
    <property type="match status" value="1"/>
</dbReference>
<dbReference type="Gene3D" id="3.30.70.1730">
    <property type="match status" value="1"/>
</dbReference>
<dbReference type="Gene3D" id="6.10.250.290">
    <property type="match status" value="1"/>
</dbReference>
<dbReference type="HAMAP" id="MF_00362">
    <property type="entry name" value="Ribosomal_uL10"/>
    <property type="match status" value="1"/>
</dbReference>
<dbReference type="InterPro" id="IPR001790">
    <property type="entry name" value="Ribosomal_uL10"/>
</dbReference>
<dbReference type="InterPro" id="IPR043141">
    <property type="entry name" value="Ribosomal_uL10-like_sf"/>
</dbReference>
<dbReference type="InterPro" id="IPR022973">
    <property type="entry name" value="Ribosomal_uL10_bac"/>
</dbReference>
<dbReference type="InterPro" id="IPR047865">
    <property type="entry name" value="Ribosomal_uL10_bac_type"/>
</dbReference>
<dbReference type="NCBIfam" id="NF000955">
    <property type="entry name" value="PRK00099.1-1"/>
    <property type="match status" value="1"/>
</dbReference>
<dbReference type="PANTHER" id="PTHR11560">
    <property type="entry name" value="39S RIBOSOMAL PROTEIN L10, MITOCHONDRIAL"/>
    <property type="match status" value="1"/>
</dbReference>
<dbReference type="Pfam" id="PF00466">
    <property type="entry name" value="Ribosomal_L10"/>
    <property type="match status" value="1"/>
</dbReference>
<dbReference type="SUPFAM" id="SSF160369">
    <property type="entry name" value="Ribosomal protein L10-like"/>
    <property type="match status" value="1"/>
</dbReference>
<keyword id="KW-0002">3D-structure</keyword>
<keyword id="KW-0687">Ribonucleoprotein</keyword>
<keyword id="KW-0689">Ribosomal protein</keyword>
<keyword id="KW-0694">RNA-binding</keyword>
<keyword id="KW-0699">rRNA-binding</keyword>